<organism>
    <name type="scientific">Caenorhabditis elegans</name>
    <dbReference type="NCBI Taxonomy" id="6239"/>
    <lineage>
        <taxon>Eukaryota</taxon>
        <taxon>Metazoa</taxon>
        <taxon>Ecdysozoa</taxon>
        <taxon>Nematoda</taxon>
        <taxon>Chromadorea</taxon>
        <taxon>Rhabditida</taxon>
        <taxon>Rhabditina</taxon>
        <taxon>Rhabditomorpha</taxon>
        <taxon>Rhabditoidea</taxon>
        <taxon>Rhabditidae</taxon>
        <taxon>Peloderinae</taxon>
        <taxon>Caenorhabditis</taxon>
    </lineage>
</organism>
<accession>Q22021</accession>
<name>ATPK_CAEEL</name>
<keyword id="KW-0066">ATP synthesis</keyword>
<keyword id="KW-0138">CF(0)</keyword>
<keyword id="KW-0375">Hydrogen ion transport</keyword>
<keyword id="KW-0406">Ion transport</keyword>
<keyword id="KW-0472">Membrane</keyword>
<keyword id="KW-0496">Mitochondrion</keyword>
<keyword id="KW-1185">Reference proteome</keyword>
<keyword id="KW-0813">Transport</keyword>
<feature type="chain" id="PRO_0000194828" description="Putative ATP synthase subunit f, mitochondrial">
    <location>
        <begin position="1"/>
        <end position="153"/>
    </location>
</feature>
<gene>
    <name evidence="3" type="ORF">R53.4</name>
</gene>
<protein>
    <recommendedName>
        <fullName>Putative ATP synthase subunit f, mitochondrial</fullName>
    </recommendedName>
</protein>
<evidence type="ECO:0000250" key="1"/>
<evidence type="ECO:0000305" key="2"/>
<evidence type="ECO:0000312" key="3">
    <source>
        <dbReference type="WormBase" id="R53.4"/>
    </source>
</evidence>
<dbReference type="EMBL" id="BX284602">
    <property type="protein sequence ID" value="CAA91350.1"/>
    <property type="molecule type" value="Genomic_DNA"/>
</dbReference>
<dbReference type="PIR" id="T24247">
    <property type="entry name" value="T24247"/>
</dbReference>
<dbReference type="RefSeq" id="NP_496152.1">
    <property type="nucleotide sequence ID" value="NM_063751.10"/>
</dbReference>
<dbReference type="SMR" id="Q22021"/>
<dbReference type="BioGRID" id="39874">
    <property type="interactions" value="12"/>
</dbReference>
<dbReference type="FunCoup" id="Q22021">
    <property type="interactions" value="319"/>
</dbReference>
<dbReference type="IntAct" id="Q22021">
    <property type="interactions" value="2"/>
</dbReference>
<dbReference type="MINT" id="Q22021"/>
<dbReference type="STRING" id="6239.R53.4.1"/>
<dbReference type="PaxDb" id="6239-R53.4"/>
<dbReference type="PeptideAtlas" id="Q22021"/>
<dbReference type="EnsemblMetazoa" id="R53.4.1">
    <property type="protein sequence ID" value="R53.4.1"/>
    <property type="gene ID" value="WBGene00011273"/>
</dbReference>
<dbReference type="GeneID" id="174554"/>
<dbReference type="KEGG" id="cel:CELE_R53.4"/>
<dbReference type="UCSC" id="R53.4.1">
    <property type="organism name" value="c. elegans"/>
</dbReference>
<dbReference type="AGR" id="WB:WBGene00011273"/>
<dbReference type="CTD" id="174554"/>
<dbReference type="WormBase" id="R53.4">
    <property type="protein sequence ID" value="CE03574"/>
    <property type="gene ID" value="WBGene00011273"/>
</dbReference>
<dbReference type="eggNOG" id="KOG4092">
    <property type="taxonomic scope" value="Eukaryota"/>
</dbReference>
<dbReference type="GeneTree" id="ENSGT00940000175005"/>
<dbReference type="HOGENOM" id="CLU_1612248_0_0_1"/>
<dbReference type="InParanoid" id="Q22021"/>
<dbReference type="OMA" id="PAEYNRA"/>
<dbReference type="OrthoDB" id="8921675at2759"/>
<dbReference type="PhylomeDB" id="Q22021"/>
<dbReference type="Reactome" id="R-CEL-163210">
    <property type="pathway name" value="Formation of ATP by chemiosmotic coupling"/>
</dbReference>
<dbReference type="Reactome" id="R-CEL-8949613">
    <property type="pathway name" value="Cristae formation"/>
</dbReference>
<dbReference type="PRO" id="PR:Q22021"/>
<dbReference type="Proteomes" id="UP000001940">
    <property type="component" value="Chromosome II"/>
</dbReference>
<dbReference type="Bgee" id="WBGene00011273">
    <property type="expression patterns" value="Expressed in embryo and 4 other cell types or tissues"/>
</dbReference>
<dbReference type="GO" id="GO:0031966">
    <property type="term" value="C:mitochondrial membrane"/>
    <property type="evidence" value="ECO:0007669"/>
    <property type="project" value="UniProtKB-SubCell"/>
</dbReference>
<dbReference type="GO" id="GO:0045259">
    <property type="term" value="C:proton-transporting ATP synthase complex"/>
    <property type="evidence" value="ECO:0000318"/>
    <property type="project" value="GO_Central"/>
</dbReference>
<dbReference type="GO" id="GO:0042776">
    <property type="term" value="P:proton motive force-driven mitochondrial ATP synthesis"/>
    <property type="evidence" value="ECO:0000318"/>
    <property type="project" value="GO_Central"/>
</dbReference>
<dbReference type="GO" id="GO:1902600">
    <property type="term" value="P:proton transmembrane transport"/>
    <property type="evidence" value="ECO:0007669"/>
    <property type="project" value="UniProtKB-KW"/>
</dbReference>
<dbReference type="InterPro" id="IPR019344">
    <property type="entry name" value="F1F0-ATPsyn_F_prd"/>
</dbReference>
<dbReference type="PANTHER" id="PTHR13080">
    <property type="entry name" value="ATP SYNTHASE F CHAIN, MITOCHONDRIAL-RELATED"/>
    <property type="match status" value="1"/>
</dbReference>
<dbReference type="PANTHER" id="PTHR13080:SF20">
    <property type="entry name" value="ATP SYNTHASE SUBUNIT F, MITOCHONDRIAL-RELATED"/>
    <property type="match status" value="1"/>
</dbReference>
<dbReference type="Pfam" id="PF10206">
    <property type="entry name" value="WRW"/>
    <property type="match status" value="1"/>
</dbReference>
<proteinExistence type="inferred from homology"/>
<reference key="1">
    <citation type="journal article" date="1998" name="Science">
        <title>Genome sequence of the nematode C. elegans: a platform for investigating biology.</title>
        <authorList>
            <consortium name="The C. elegans sequencing consortium"/>
        </authorList>
    </citation>
    <scope>NUCLEOTIDE SEQUENCE [LARGE SCALE GENOMIC DNA]</scope>
    <source>
        <strain>Bristol N2</strain>
    </source>
</reference>
<sequence>MAWFRPPPPHTQLRPWVPDAIFIPISRAVERVGVFFYNRVLNKTEVGLFDKRWNKNVHGPYCHWRYYGKLDTKFMDVKLGDLPAWMARREKTPSAFYNEFMRNIWRVHNLYYSGPVYNNTVKVIFRFIFAYSFLNWLVKSHRYVDFQKTMYHW</sequence>
<comment type="function">
    <text evidence="1">Mitochondrial membrane ATP synthase (F(1)F(0) ATP synthase or Complex V) produces ATP from ADP in the presence of a proton gradient across the membrane which is generated by electron transport complexes of the respiratory chain. F-type ATPases consist of two structural domains, F(1) - containing the extramembraneous catalytic core and F(0) - containing the membrane proton channel, linked together by a central stalk and a peripheral stalk. During catalysis, ATP synthesis in the catalytic domain of F(1) is coupled via a rotary mechanism of the central stalk subunits to proton translocation. Part of the complex F(0) domain. Minor subunit located with subunit a in the membrane (By similarity).</text>
</comment>
<comment type="subunit">
    <text evidence="2">Subunit of the F-type ATPase which has 2 components, CF(1) - the catalytic core - and CF(0) - the membrane proton channel.</text>
</comment>
<comment type="subcellular location">
    <subcellularLocation>
        <location evidence="1">Mitochondrion membrane</location>
    </subcellularLocation>
</comment>
<comment type="similarity">
    <text evidence="2">Belongs to the ATPase F chain family.</text>
</comment>